<name>Y4367_DICDI</name>
<keyword id="KW-0378">Hydrolase</keyword>
<keyword id="KW-0472">Membrane</keyword>
<keyword id="KW-1185">Reference proteome</keyword>
<keyword id="KW-0812">Transmembrane</keyword>
<keyword id="KW-1133">Transmembrane helix</keyword>
<protein>
    <recommendedName>
        <fullName>PA-phosphatase related-family protein DDB_G0284367</fullName>
    </recommendedName>
</protein>
<proteinExistence type="inferred from homology"/>
<dbReference type="EMBL" id="AAFI02000064">
    <property type="protein sequence ID" value="EAL65232.1"/>
    <property type="molecule type" value="Genomic_DNA"/>
</dbReference>
<dbReference type="RefSeq" id="XP_638587.1">
    <property type="nucleotide sequence ID" value="XM_633495.1"/>
</dbReference>
<dbReference type="SMR" id="Q54PR7"/>
<dbReference type="FunCoup" id="Q54PR7">
    <property type="interactions" value="4"/>
</dbReference>
<dbReference type="STRING" id="44689.Q54PR7"/>
<dbReference type="PaxDb" id="44689-DDB0232326"/>
<dbReference type="EnsemblProtists" id="EAL65232">
    <property type="protein sequence ID" value="EAL65232"/>
    <property type="gene ID" value="DDB_G0284367"/>
</dbReference>
<dbReference type="GeneID" id="8624559"/>
<dbReference type="KEGG" id="ddi:DDB_G0284367"/>
<dbReference type="dictyBase" id="DDB_G0284367"/>
<dbReference type="VEuPathDB" id="AmoebaDB:DDB_G0284367"/>
<dbReference type="eggNOG" id="KOG3030">
    <property type="taxonomic scope" value="Eukaryota"/>
</dbReference>
<dbReference type="HOGENOM" id="CLU_021458_5_1_1"/>
<dbReference type="InParanoid" id="Q54PR7"/>
<dbReference type="OMA" id="PWWDLRS"/>
<dbReference type="PhylomeDB" id="Q54PR7"/>
<dbReference type="Reactome" id="R-DDI-2029485">
    <property type="pathway name" value="Role of phospholipids in phagocytosis"/>
</dbReference>
<dbReference type="Reactome" id="R-DDI-419408">
    <property type="pathway name" value="Lysosphingolipid and LPA receptors"/>
</dbReference>
<dbReference type="Reactome" id="R-DDI-9845614">
    <property type="pathway name" value="Sphingolipid catabolism"/>
</dbReference>
<dbReference type="PRO" id="PR:Q54PR7"/>
<dbReference type="Proteomes" id="UP000002195">
    <property type="component" value="Chromosome 4"/>
</dbReference>
<dbReference type="GO" id="GO:0016020">
    <property type="term" value="C:membrane"/>
    <property type="evidence" value="ECO:0000318"/>
    <property type="project" value="GO_Central"/>
</dbReference>
<dbReference type="GO" id="GO:0008195">
    <property type="term" value="F:phosphatidate phosphatase activity"/>
    <property type="evidence" value="ECO:0000318"/>
    <property type="project" value="GO_Central"/>
</dbReference>
<dbReference type="GO" id="GO:0046839">
    <property type="term" value="P:phospholipid dephosphorylation"/>
    <property type="evidence" value="ECO:0000318"/>
    <property type="project" value="GO_Central"/>
</dbReference>
<dbReference type="GO" id="GO:0006644">
    <property type="term" value="P:phospholipid metabolic process"/>
    <property type="evidence" value="ECO:0000318"/>
    <property type="project" value="GO_Central"/>
</dbReference>
<dbReference type="CDD" id="cd03390">
    <property type="entry name" value="PAP2_containing_1_like"/>
    <property type="match status" value="1"/>
</dbReference>
<dbReference type="Gene3D" id="1.20.144.10">
    <property type="entry name" value="Phosphatidic acid phosphatase type 2/haloperoxidase"/>
    <property type="match status" value="1"/>
</dbReference>
<dbReference type="InterPro" id="IPR036938">
    <property type="entry name" value="P_Acid_Pase_2/haloperoxi_sf"/>
</dbReference>
<dbReference type="InterPro" id="IPR000326">
    <property type="entry name" value="P_Acid_Pase_2/haloperoxidase"/>
</dbReference>
<dbReference type="InterPro" id="IPR043216">
    <property type="entry name" value="PA_PP_rel"/>
</dbReference>
<dbReference type="PANTHER" id="PTHR10165">
    <property type="entry name" value="LIPID PHOSPHATE PHOSPHATASE"/>
    <property type="match status" value="1"/>
</dbReference>
<dbReference type="PANTHER" id="PTHR10165:SF35">
    <property type="entry name" value="RE23632P"/>
    <property type="match status" value="1"/>
</dbReference>
<dbReference type="Pfam" id="PF01569">
    <property type="entry name" value="PAP2"/>
    <property type="match status" value="1"/>
</dbReference>
<dbReference type="SMART" id="SM00014">
    <property type="entry name" value="acidPPc"/>
    <property type="match status" value="1"/>
</dbReference>
<dbReference type="SUPFAM" id="SSF48317">
    <property type="entry name" value="Acid phosphatase/Vanadium-dependent haloperoxidase"/>
    <property type="match status" value="1"/>
</dbReference>
<accession>Q54PR7</accession>
<feature type="chain" id="PRO_0000367486" description="PA-phosphatase related-family protein DDB_G0284367">
    <location>
        <begin position="1"/>
        <end position="271"/>
    </location>
</feature>
<feature type="transmembrane region" description="Helical" evidence="1">
    <location>
        <begin position="23"/>
        <end position="43"/>
    </location>
</feature>
<feature type="transmembrane region" description="Helical" evidence="1">
    <location>
        <begin position="68"/>
        <end position="88"/>
    </location>
</feature>
<feature type="transmembrane region" description="Helical" evidence="1">
    <location>
        <begin position="102"/>
        <end position="122"/>
    </location>
</feature>
<feature type="transmembrane region" description="Helical" evidence="1">
    <location>
        <begin position="150"/>
        <end position="170"/>
    </location>
</feature>
<feature type="transmembrane region" description="Helical" evidence="1">
    <location>
        <begin position="181"/>
        <end position="201"/>
    </location>
</feature>
<feature type="transmembrane region" description="Helical" evidence="1">
    <location>
        <begin position="211"/>
        <end position="231"/>
    </location>
</feature>
<sequence length="271" mass="30533">MIHRVSFYGKTTWFTKQHLIDWFLCLGIFVIESVLFNFVIPPFKRYEPESNISTNTFQLVQYPLLPDIVPVWLLMLIALGLPMVVFIGYYIKNRNSHDFHHAALGLFQAFTITMLFTDILKVSAGRYRPDYGARVATGIEAVIREGRVSFPSGHSSVSFCGMTFLSFYLCGKTKVFLKDGGNILKALVCLCPFMISALVAVSRTVDYHHDFSDILAGSVIGLSIGVFVYFMNFNSLFSKECSLPKNRINPHYARDGLLSAEYQSLSISSSL</sequence>
<organism>
    <name type="scientific">Dictyostelium discoideum</name>
    <name type="common">Social amoeba</name>
    <dbReference type="NCBI Taxonomy" id="44689"/>
    <lineage>
        <taxon>Eukaryota</taxon>
        <taxon>Amoebozoa</taxon>
        <taxon>Evosea</taxon>
        <taxon>Eumycetozoa</taxon>
        <taxon>Dictyostelia</taxon>
        <taxon>Dictyosteliales</taxon>
        <taxon>Dictyosteliaceae</taxon>
        <taxon>Dictyostelium</taxon>
    </lineage>
</organism>
<comment type="subcellular location">
    <subcellularLocation>
        <location evidence="2">Membrane</location>
        <topology evidence="2">Multi-pass membrane protein</topology>
    </subcellularLocation>
</comment>
<comment type="similarity">
    <text evidence="2">Belongs to the PA-phosphatase related phosphoesterase family.</text>
</comment>
<reference key="1">
    <citation type="journal article" date="2005" name="Nature">
        <title>The genome of the social amoeba Dictyostelium discoideum.</title>
        <authorList>
            <person name="Eichinger L."/>
            <person name="Pachebat J.A."/>
            <person name="Gloeckner G."/>
            <person name="Rajandream M.A."/>
            <person name="Sucgang R."/>
            <person name="Berriman M."/>
            <person name="Song J."/>
            <person name="Olsen R."/>
            <person name="Szafranski K."/>
            <person name="Xu Q."/>
            <person name="Tunggal B."/>
            <person name="Kummerfeld S."/>
            <person name="Madera M."/>
            <person name="Konfortov B.A."/>
            <person name="Rivero F."/>
            <person name="Bankier A.T."/>
            <person name="Lehmann R."/>
            <person name="Hamlin N."/>
            <person name="Davies R."/>
            <person name="Gaudet P."/>
            <person name="Fey P."/>
            <person name="Pilcher K."/>
            <person name="Chen G."/>
            <person name="Saunders D."/>
            <person name="Sodergren E.J."/>
            <person name="Davis P."/>
            <person name="Kerhornou A."/>
            <person name="Nie X."/>
            <person name="Hall N."/>
            <person name="Anjard C."/>
            <person name="Hemphill L."/>
            <person name="Bason N."/>
            <person name="Farbrother P."/>
            <person name="Desany B."/>
            <person name="Just E."/>
            <person name="Morio T."/>
            <person name="Rost R."/>
            <person name="Churcher C.M."/>
            <person name="Cooper J."/>
            <person name="Haydock S."/>
            <person name="van Driessche N."/>
            <person name="Cronin A."/>
            <person name="Goodhead I."/>
            <person name="Muzny D.M."/>
            <person name="Mourier T."/>
            <person name="Pain A."/>
            <person name="Lu M."/>
            <person name="Harper D."/>
            <person name="Lindsay R."/>
            <person name="Hauser H."/>
            <person name="James K.D."/>
            <person name="Quiles M."/>
            <person name="Madan Babu M."/>
            <person name="Saito T."/>
            <person name="Buchrieser C."/>
            <person name="Wardroper A."/>
            <person name="Felder M."/>
            <person name="Thangavelu M."/>
            <person name="Johnson D."/>
            <person name="Knights A."/>
            <person name="Loulseged H."/>
            <person name="Mungall K.L."/>
            <person name="Oliver K."/>
            <person name="Price C."/>
            <person name="Quail M.A."/>
            <person name="Urushihara H."/>
            <person name="Hernandez J."/>
            <person name="Rabbinowitsch E."/>
            <person name="Steffen D."/>
            <person name="Sanders M."/>
            <person name="Ma J."/>
            <person name="Kohara Y."/>
            <person name="Sharp S."/>
            <person name="Simmonds M.N."/>
            <person name="Spiegler S."/>
            <person name="Tivey A."/>
            <person name="Sugano S."/>
            <person name="White B."/>
            <person name="Walker D."/>
            <person name="Woodward J.R."/>
            <person name="Winckler T."/>
            <person name="Tanaka Y."/>
            <person name="Shaulsky G."/>
            <person name="Schleicher M."/>
            <person name="Weinstock G.M."/>
            <person name="Rosenthal A."/>
            <person name="Cox E.C."/>
            <person name="Chisholm R.L."/>
            <person name="Gibbs R.A."/>
            <person name="Loomis W.F."/>
            <person name="Platzer M."/>
            <person name="Kay R.R."/>
            <person name="Williams J.G."/>
            <person name="Dear P.H."/>
            <person name="Noegel A.A."/>
            <person name="Barrell B.G."/>
            <person name="Kuspa A."/>
        </authorList>
    </citation>
    <scope>NUCLEOTIDE SEQUENCE [LARGE SCALE GENOMIC DNA]</scope>
    <source>
        <strain>AX4</strain>
    </source>
</reference>
<evidence type="ECO:0000255" key="1"/>
<evidence type="ECO:0000305" key="2"/>
<gene>
    <name type="ORF">DDB_G0284367</name>
</gene>